<gene>
    <name evidence="16 18" type="primary">NMT1</name>
    <name evidence="15" type="synonym">NMT</name>
</gene>
<comment type="function">
    <text evidence="4 5 6 7 8 9 10 11">Adds a myristoyl group to the N-terminal glycine residue of certain cellular and viral proteins (PubMed:22865860, PubMed:25255805, PubMed:32686708, PubMed:34999170, PubMed:9353336, PubMed:9506952). Also able to mediate N-terminal lysine myristoylation of proteins: catalyzes myristoylation of ARF6 on both 'Gly-2' and 'Lys-3' (PubMed:32103017, PubMed:32111831). Lysine myristoylation is required to maintain ARF6 on membranes during the GTPase cycle (PubMed:32103017).</text>
</comment>
<comment type="catalytic activity">
    <reaction evidence="4 5 6 7 8 9 10 11">
        <text>N-terminal glycyl-[protein] + tetradecanoyl-CoA = N-tetradecanoylglycyl-[protein] + CoA + H(+)</text>
        <dbReference type="Rhea" id="RHEA:15521"/>
        <dbReference type="Rhea" id="RHEA-COMP:12666"/>
        <dbReference type="Rhea" id="RHEA-COMP:12667"/>
        <dbReference type="ChEBI" id="CHEBI:15378"/>
        <dbReference type="ChEBI" id="CHEBI:57287"/>
        <dbReference type="ChEBI" id="CHEBI:57385"/>
        <dbReference type="ChEBI" id="CHEBI:64723"/>
        <dbReference type="ChEBI" id="CHEBI:133050"/>
        <dbReference type="EC" id="2.3.1.97"/>
    </reaction>
</comment>
<comment type="catalytic activity">
    <reaction evidence="6 7">
        <text>N-terminal glycyl-L-lysyl-[protein] + tetradecanoyl-CoA = N-terminal glycyl-(N(6)-tetradecanoyl)-L-lysyl-[protein] + CoA + H(+)</text>
        <dbReference type="Rhea" id="RHEA:70671"/>
        <dbReference type="Rhea" id="RHEA-COMP:17947"/>
        <dbReference type="Rhea" id="RHEA-COMP:17948"/>
        <dbReference type="ChEBI" id="CHEBI:15378"/>
        <dbReference type="ChEBI" id="CHEBI:57287"/>
        <dbReference type="ChEBI" id="CHEBI:57385"/>
        <dbReference type="ChEBI" id="CHEBI:189855"/>
        <dbReference type="ChEBI" id="CHEBI:189856"/>
    </reaction>
    <physiologicalReaction direction="left-to-right" evidence="6 7">
        <dbReference type="Rhea" id="RHEA:70672"/>
    </physiologicalReaction>
</comment>
<comment type="biophysicochemical properties">
    <kinetics>
        <KM evidence="7">18 uM for tetradecanoyl-CoA</KM>
        <text evidence="7">kcat is 0.41 sec(-1) with tetradecanoyl-CoA as substrate.</text>
    </kinetics>
</comment>
<comment type="interaction">
    <interactant intactId="EBI-5280164">
        <id>P30419</id>
    </interactant>
    <interactant intactId="EBI-2848793">
        <id>Q9BR61</id>
        <label>ACBD6</label>
    </interactant>
    <organismsDiffer>false</organismsDiffer>
    <experiments>6</experiments>
</comment>
<comment type="subcellular location">
    <subcellularLocation>
        <location evidence="10 11">Cytoplasm</location>
    </subcellularLocation>
    <subcellularLocation>
        <location evidence="10">Cytoplasm</location>
        <location evidence="10">Cytosol</location>
    </subcellularLocation>
    <subcellularLocation>
        <location evidence="11">Membrane</location>
        <topology evidence="11">Peripheral membrane protein</topology>
    </subcellularLocation>
    <text evidence="10">Copurifies with ribosomes.</text>
</comment>
<comment type="alternative products">
    <event type="alternative splicing"/>
    <isoform>
        <id>P30419-1</id>
        <name>Long</name>
        <sequence type="displayed"/>
    </isoform>
    <isoform>
        <id>P30419-2</id>
        <name>Short</name>
        <sequence type="described" ref="VSP_003570"/>
    </isoform>
</comment>
<comment type="tissue specificity">
    <text evidence="3">Heart, gut, kidney, liver and placenta.</text>
</comment>
<comment type="similarity">
    <text evidence="17">Belongs to the NMT family.</text>
</comment>
<comment type="sequence caution" evidence="17">
    <conflict type="erroneous initiation">
        <sequence resource="EMBL-CDS" id="AAC09294"/>
    </conflict>
</comment>
<comment type="online information" name="Atlas of Genetics and Cytogenetics in Oncology and Haematology">
    <link uri="https://atlasgeneticsoncology.org/gene/43604/NMT1"/>
</comment>
<name>NMT1_HUMAN</name>
<proteinExistence type="evidence at protein level"/>
<dbReference type="EC" id="2.3.1.97" evidence="4 5 10 11"/>
<dbReference type="EC" id="2.3.1.-" evidence="6 7"/>
<dbReference type="EMBL" id="AF043324">
    <property type="protein sequence ID" value="AAC09294.1"/>
    <property type="status" value="ALT_INIT"/>
    <property type="molecule type" value="mRNA"/>
</dbReference>
<dbReference type="EMBL" id="AF020500">
    <property type="protein sequence ID" value="AAB95316.1"/>
    <property type="molecule type" value="mRNA"/>
</dbReference>
<dbReference type="EMBL" id="AK291936">
    <property type="protein sequence ID" value="BAF84625.1"/>
    <property type="molecule type" value="mRNA"/>
</dbReference>
<dbReference type="EMBL" id="CH471178">
    <property type="protein sequence ID" value="EAW51554.1"/>
    <property type="molecule type" value="Genomic_DNA"/>
</dbReference>
<dbReference type="EMBL" id="BC006538">
    <property type="protein sequence ID" value="AAH06538.1"/>
    <property type="molecule type" value="mRNA"/>
</dbReference>
<dbReference type="EMBL" id="BC006569">
    <property type="protein sequence ID" value="AAH06569.1"/>
    <property type="molecule type" value="mRNA"/>
</dbReference>
<dbReference type="EMBL" id="BC007258">
    <property type="protein sequence ID" value="AAH07258.2"/>
    <property type="molecule type" value="mRNA"/>
</dbReference>
<dbReference type="EMBL" id="BC008312">
    <property type="protein sequence ID" value="AAH08312.2"/>
    <property type="molecule type" value="mRNA"/>
</dbReference>
<dbReference type="EMBL" id="M86707">
    <property type="status" value="NOT_ANNOTATED_CDS"/>
    <property type="molecule type" value="mRNA"/>
</dbReference>
<dbReference type="EMBL" id="Y17208">
    <property type="protein sequence ID" value="CAA76685.1"/>
    <property type="molecule type" value="mRNA"/>
</dbReference>
<dbReference type="EMBL" id="Y17209">
    <property type="protein sequence ID" value="CAA76686.1"/>
    <property type="molecule type" value="mRNA"/>
</dbReference>
<dbReference type="CCDS" id="CCDS11494.1">
    <molecule id="P30419-1"/>
</dbReference>
<dbReference type="PIR" id="JC1343">
    <property type="entry name" value="JC1343"/>
</dbReference>
<dbReference type="RefSeq" id="NP_066565.1">
    <molecule id="P30419-1"/>
    <property type="nucleotide sequence ID" value="NM_021079.5"/>
</dbReference>
<dbReference type="PDB" id="1RXT">
    <property type="method" value="X-ray"/>
    <property type="resolution" value="3.00 A"/>
    <property type="chains" value="A/B/C/D=1-496"/>
</dbReference>
<dbReference type="PDB" id="3IU1">
    <property type="method" value="X-ray"/>
    <property type="resolution" value="1.42 A"/>
    <property type="chains" value="A/B=115-496"/>
</dbReference>
<dbReference type="PDB" id="3IU2">
    <property type="method" value="X-ray"/>
    <property type="resolution" value="1.73 A"/>
    <property type="chains" value="A/B=115-496"/>
</dbReference>
<dbReference type="PDB" id="3IWE">
    <property type="method" value="X-ray"/>
    <property type="resolution" value="1.79 A"/>
    <property type="chains" value="A/B=115-496"/>
</dbReference>
<dbReference type="PDB" id="3JTK">
    <property type="method" value="X-ray"/>
    <property type="resolution" value="1.61 A"/>
    <property type="chains" value="A/B=115-496"/>
</dbReference>
<dbReference type="PDB" id="4C2Y">
    <property type="method" value="X-ray"/>
    <property type="resolution" value="1.64 A"/>
    <property type="chains" value="A/B=109-496"/>
</dbReference>
<dbReference type="PDB" id="4C2Z">
    <property type="method" value="X-ray"/>
    <property type="resolution" value="2.08 A"/>
    <property type="chains" value="A/B=109-496"/>
</dbReference>
<dbReference type="PDB" id="5MU6">
    <property type="method" value="X-ray"/>
    <property type="resolution" value="1.88 A"/>
    <property type="chains" value="A/B=109-496"/>
</dbReference>
<dbReference type="PDB" id="5NPQ">
    <property type="method" value="X-ray"/>
    <property type="resolution" value="2.37 A"/>
    <property type="chains" value="A/B=109-496"/>
</dbReference>
<dbReference type="PDB" id="5O6H">
    <property type="method" value="X-ray"/>
    <property type="resolution" value="1.29 A"/>
    <property type="chains" value="A/B=109-496"/>
</dbReference>
<dbReference type="PDB" id="5O6J">
    <property type="method" value="X-ray"/>
    <property type="resolution" value="1.45 A"/>
    <property type="chains" value="A/B=109-496"/>
</dbReference>
<dbReference type="PDB" id="5O9S">
    <property type="method" value="X-ray"/>
    <property type="resolution" value="2.70 A"/>
    <property type="chains" value="A/B=99-496"/>
</dbReference>
<dbReference type="PDB" id="5O9T">
    <property type="method" value="X-ray"/>
    <property type="resolution" value="2.15 A"/>
    <property type="chains" value="A/B=99-496"/>
</dbReference>
<dbReference type="PDB" id="5O9U">
    <property type="method" value="X-ray"/>
    <property type="resolution" value="1.85 A"/>
    <property type="chains" value="A/B=99-496"/>
</dbReference>
<dbReference type="PDB" id="5O9V">
    <property type="method" value="X-ray"/>
    <property type="resolution" value="2.20 A"/>
    <property type="chains" value="A/B=99-496"/>
</dbReference>
<dbReference type="PDB" id="5UUT">
    <property type="method" value="X-ray"/>
    <property type="resolution" value="2.25 A"/>
    <property type="chains" value="A/B=109-496"/>
</dbReference>
<dbReference type="PDB" id="6EHJ">
    <property type="method" value="X-ray"/>
    <property type="resolution" value="2.10 A"/>
    <property type="chains" value="A/B=109-496"/>
</dbReference>
<dbReference type="PDB" id="6F56">
    <property type="method" value="X-ray"/>
    <property type="resolution" value="1.94 A"/>
    <property type="chains" value="A/B/C/D=109-496"/>
</dbReference>
<dbReference type="PDB" id="6FZ2">
    <property type="method" value="X-ray"/>
    <property type="resolution" value="2.05 A"/>
    <property type="chains" value="A/B=115-496"/>
</dbReference>
<dbReference type="PDB" id="6FZ3">
    <property type="method" value="X-ray"/>
    <property type="resolution" value="2.00 A"/>
    <property type="chains" value="A/B=115-496"/>
</dbReference>
<dbReference type="PDB" id="6FZ5">
    <property type="method" value="X-ray"/>
    <property type="resolution" value="1.89 A"/>
    <property type="chains" value="A/B=115-496"/>
</dbReference>
<dbReference type="PDB" id="6PAV">
    <property type="method" value="X-ray"/>
    <property type="resolution" value="2.52 A"/>
    <property type="chains" value="A/B=109-496"/>
</dbReference>
<dbReference type="PDB" id="6QRM">
    <property type="method" value="X-ray"/>
    <property type="resolution" value="2.30 A"/>
    <property type="chains" value="A/B=99-496"/>
</dbReference>
<dbReference type="PDB" id="6SJZ">
    <property type="method" value="X-ray"/>
    <property type="resolution" value="2.00 A"/>
    <property type="chains" value="A/B=99-496"/>
</dbReference>
<dbReference type="PDB" id="6SK2">
    <property type="method" value="X-ray"/>
    <property type="resolution" value="1.90 A"/>
    <property type="chains" value="A/B=99-496"/>
</dbReference>
<dbReference type="PDB" id="6SK3">
    <property type="method" value="X-ray"/>
    <property type="resolution" value="2.70 A"/>
    <property type="chains" value="A/B=99-493"/>
</dbReference>
<dbReference type="PDB" id="6SK8">
    <property type="method" value="X-ray"/>
    <property type="resolution" value="1.87 A"/>
    <property type="chains" value="A/B=99-493"/>
</dbReference>
<dbReference type="PDB" id="6SKJ">
    <property type="method" value="X-ray"/>
    <property type="resolution" value="2.80 A"/>
    <property type="chains" value="A/B=99-494"/>
</dbReference>
<dbReference type="PDB" id="7OWM">
    <property type="method" value="X-ray"/>
    <property type="resolution" value="1.50 A"/>
    <property type="chains" value="A/B=99-496"/>
</dbReference>
<dbReference type="PDB" id="7OWN">
    <property type="method" value="X-ray"/>
    <property type="resolution" value="2.10 A"/>
    <property type="chains" value="A/B=99-496"/>
</dbReference>
<dbReference type="PDB" id="7OWO">
    <property type="method" value="X-ray"/>
    <property type="resolution" value="1.70 A"/>
    <property type="chains" value="A/B=99-496"/>
</dbReference>
<dbReference type="PDB" id="7OWP">
    <property type="method" value="X-ray"/>
    <property type="resolution" value="1.81 A"/>
    <property type="chains" value="A/B=99-496"/>
</dbReference>
<dbReference type="PDB" id="7OWQ">
    <property type="method" value="X-ray"/>
    <property type="resolution" value="3.00 A"/>
    <property type="chains" value="A/B=99-496"/>
</dbReference>
<dbReference type="PDB" id="7OWR">
    <property type="method" value="X-ray"/>
    <property type="resolution" value="2.39 A"/>
    <property type="chains" value="A/B=99-496"/>
</dbReference>
<dbReference type="PDB" id="7OWU">
    <property type="method" value="X-ray"/>
    <property type="resolution" value="2.08 A"/>
    <property type="chains" value="A/B=99-496"/>
</dbReference>
<dbReference type="PDB" id="7RK3">
    <property type="method" value="X-ray"/>
    <property type="resolution" value="2.05 A"/>
    <property type="chains" value="A=109-496"/>
</dbReference>
<dbReference type="PDB" id="8Q23">
    <property type="method" value="X-ray"/>
    <property type="resolution" value="1.90 A"/>
    <property type="chains" value="A/B=99-496"/>
</dbReference>
<dbReference type="PDB" id="8Q24">
    <property type="method" value="X-ray"/>
    <property type="resolution" value="1.90 A"/>
    <property type="chains" value="A/B=99-496"/>
</dbReference>
<dbReference type="PDB" id="8Q26">
    <property type="method" value="X-ray"/>
    <property type="resolution" value="1.90 A"/>
    <property type="chains" value="A/B=99-496"/>
</dbReference>
<dbReference type="PDB" id="8Q2Z">
    <property type="method" value="X-ray"/>
    <property type="resolution" value="1.88 A"/>
    <property type="chains" value="A/B=99-496"/>
</dbReference>
<dbReference type="PDB" id="8Q3D">
    <property type="method" value="X-ray"/>
    <property type="resolution" value="2.15 A"/>
    <property type="chains" value="A/B=99-496"/>
</dbReference>
<dbReference type="PDB" id="8Q3S">
    <property type="method" value="X-ray"/>
    <property type="resolution" value="1.78 A"/>
    <property type="chains" value="A/B=99-496"/>
</dbReference>
<dbReference type="PDB" id="8Q3T">
    <property type="method" value="X-ray"/>
    <property type="resolution" value="1.96 A"/>
    <property type="chains" value="A/B=99-496"/>
</dbReference>
<dbReference type="PDBsum" id="1RXT"/>
<dbReference type="PDBsum" id="3IU1"/>
<dbReference type="PDBsum" id="3IU2"/>
<dbReference type="PDBsum" id="3IWE"/>
<dbReference type="PDBsum" id="3JTK"/>
<dbReference type="PDBsum" id="4C2Y"/>
<dbReference type="PDBsum" id="4C2Z"/>
<dbReference type="PDBsum" id="5MU6"/>
<dbReference type="PDBsum" id="5NPQ"/>
<dbReference type="PDBsum" id="5O6H"/>
<dbReference type="PDBsum" id="5O6J"/>
<dbReference type="PDBsum" id="5O9S"/>
<dbReference type="PDBsum" id="5O9T"/>
<dbReference type="PDBsum" id="5O9U"/>
<dbReference type="PDBsum" id="5O9V"/>
<dbReference type="PDBsum" id="5UUT"/>
<dbReference type="PDBsum" id="6EHJ"/>
<dbReference type="PDBsum" id="6F56"/>
<dbReference type="PDBsum" id="6FZ2"/>
<dbReference type="PDBsum" id="6FZ3"/>
<dbReference type="PDBsum" id="6FZ5"/>
<dbReference type="PDBsum" id="6PAV"/>
<dbReference type="PDBsum" id="6QRM"/>
<dbReference type="PDBsum" id="6SJZ"/>
<dbReference type="PDBsum" id="6SK2"/>
<dbReference type="PDBsum" id="6SK3"/>
<dbReference type="PDBsum" id="6SK8"/>
<dbReference type="PDBsum" id="6SKJ"/>
<dbReference type="PDBsum" id="7OWM"/>
<dbReference type="PDBsum" id="7OWN"/>
<dbReference type="PDBsum" id="7OWO"/>
<dbReference type="PDBsum" id="7OWP"/>
<dbReference type="PDBsum" id="7OWQ"/>
<dbReference type="PDBsum" id="7OWR"/>
<dbReference type="PDBsum" id="7OWU"/>
<dbReference type="PDBsum" id="7RK3"/>
<dbReference type="PDBsum" id="8Q23"/>
<dbReference type="PDBsum" id="8Q24"/>
<dbReference type="PDBsum" id="8Q26"/>
<dbReference type="PDBsum" id="8Q2Z"/>
<dbReference type="PDBsum" id="8Q3D"/>
<dbReference type="PDBsum" id="8Q3S"/>
<dbReference type="PDBsum" id="8Q3T"/>
<dbReference type="SMR" id="P30419"/>
<dbReference type="BioGRID" id="110899">
    <property type="interactions" value="173"/>
</dbReference>
<dbReference type="FunCoup" id="P30419">
    <property type="interactions" value="3209"/>
</dbReference>
<dbReference type="IntAct" id="P30419">
    <property type="interactions" value="65"/>
</dbReference>
<dbReference type="MINT" id="P30419"/>
<dbReference type="STRING" id="9606.ENSP00000468424"/>
<dbReference type="BindingDB" id="P30419"/>
<dbReference type="ChEMBL" id="CHEMBL2593"/>
<dbReference type="DrugBank" id="DB03062">
    <property type="generic name" value="(1-Methyl-1h-Imidazol-2-Yl)-(3-Methyl-4-{3-[(Pyridin-3-Ylmethyl)-Amino]-Propoxy}-Benzofuran-2-Yl)-Methanone"/>
</dbReference>
<dbReference type="SwissLipids" id="SLP:000001287"/>
<dbReference type="GlyGen" id="P30419">
    <property type="glycosylation" value="1 site, 1 O-linked glycan (1 site)"/>
</dbReference>
<dbReference type="iPTMnet" id="P30419"/>
<dbReference type="MetOSite" id="P30419"/>
<dbReference type="PhosphoSitePlus" id="P30419"/>
<dbReference type="SwissPalm" id="P30419"/>
<dbReference type="BioMuta" id="NMT1"/>
<dbReference type="DMDM" id="12231020"/>
<dbReference type="jPOST" id="P30419"/>
<dbReference type="MassIVE" id="P30419"/>
<dbReference type="PaxDb" id="9606-ENSP00000468424"/>
<dbReference type="PeptideAtlas" id="P30419"/>
<dbReference type="ProteomicsDB" id="54667">
    <molecule id="P30419-1"/>
</dbReference>
<dbReference type="ProteomicsDB" id="54668">
    <molecule id="P30419-2"/>
</dbReference>
<dbReference type="Pumba" id="P30419"/>
<dbReference type="TopDownProteomics" id="P30419-2">
    <molecule id="P30419-2"/>
</dbReference>
<dbReference type="Antibodypedia" id="17578">
    <property type="antibodies" value="199 antibodies from 25 providers"/>
</dbReference>
<dbReference type="DNASU" id="4836"/>
<dbReference type="Ensembl" id="ENST00000258960.7">
    <molecule id="P30419-1"/>
    <property type="protein sequence ID" value="ENSP00000258960.2"/>
    <property type="gene ID" value="ENSG00000136448.13"/>
</dbReference>
<dbReference type="Ensembl" id="ENST00000592654.3">
    <molecule id="P30419-2"/>
    <property type="protein sequence ID" value="ENSP00000466827.2"/>
    <property type="gene ID" value="ENSG00000136448.13"/>
</dbReference>
<dbReference type="Ensembl" id="ENST00000592782.5">
    <molecule id="P30419-1"/>
    <property type="protein sequence ID" value="ENSP00000468424.1"/>
    <property type="gene ID" value="ENSG00000136448.13"/>
</dbReference>
<dbReference type="Ensembl" id="ENST00000676828.1">
    <molecule id="P30419-1"/>
    <property type="protein sequence ID" value="ENSP00000504192.1"/>
    <property type="gene ID" value="ENSG00000136448.13"/>
</dbReference>
<dbReference type="Ensembl" id="ENST00000678938.1">
    <molecule id="P30419-2"/>
    <property type="protein sequence ID" value="ENSP00000503621.1"/>
    <property type="gene ID" value="ENSG00000136448.13"/>
</dbReference>
<dbReference type="GeneID" id="4836"/>
<dbReference type="KEGG" id="hsa:4836"/>
<dbReference type="MANE-Select" id="ENST00000258960.7">
    <property type="protein sequence ID" value="ENSP00000258960.2"/>
    <property type="RefSeq nucleotide sequence ID" value="NM_021079.5"/>
    <property type="RefSeq protein sequence ID" value="NP_066565.1"/>
</dbReference>
<dbReference type="UCSC" id="uc002ihz.4">
    <molecule id="P30419-1"/>
    <property type="organism name" value="human"/>
</dbReference>
<dbReference type="AGR" id="HGNC:7857"/>
<dbReference type="CTD" id="4836"/>
<dbReference type="DisGeNET" id="4836"/>
<dbReference type="GeneCards" id="NMT1"/>
<dbReference type="HGNC" id="HGNC:7857">
    <property type="gene designation" value="NMT1"/>
</dbReference>
<dbReference type="HPA" id="ENSG00000136448">
    <property type="expression patterns" value="Low tissue specificity"/>
</dbReference>
<dbReference type="MIM" id="160993">
    <property type="type" value="gene"/>
</dbReference>
<dbReference type="neXtProt" id="NX_P30419"/>
<dbReference type="OpenTargets" id="ENSG00000136448"/>
<dbReference type="PharmGKB" id="PA31661"/>
<dbReference type="VEuPathDB" id="HostDB:ENSG00000136448"/>
<dbReference type="eggNOG" id="KOG2779">
    <property type="taxonomic scope" value="Eukaryota"/>
</dbReference>
<dbReference type="GeneTree" id="ENSGT00390000017837"/>
<dbReference type="HOGENOM" id="CLU_022882_1_0_1"/>
<dbReference type="InParanoid" id="P30419"/>
<dbReference type="OMA" id="EHDVEHW"/>
<dbReference type="OrthoDB" id="60315at2759"/>
<dbReference type="PAN-GO" id="P30419">
    <property type="GO annotations" value="3 GO annotations based on evolutionary models"/>
</dbReference>
<dbReference type="PhylomeDB" id="P30419"/>
<dbReference type="BRENDA" id="2.3.1.97">
    <property type="organism ID" value="2681"/>
</dbReference>
<dbReference type="PathwayCommons" id="P30419"/>
<dbReference type="Reactome" id="R-HSA-162599">
    <property type="pathway name" value="Late Phase of HIV Life Cycle"/>
</dbReference>
<dbReference type="Reactome" id="R-HSA-203615">
    <property type="pathway name" value="eNOS activation"/>
</dbReference>
<dbReference type="Reactome" id="R-HSA-2514859">
    <property type="pathway name" value="Inactivation, recovery and regulation of the phototransduction cascade"/>
</dbReference>
<dbReference type="Reactome" id="R-HSA-75108">
    <property type="pathway name" value="Activation, myristolyation of BID and translocation to mitochondria"/>
</dbReference>
<dbReference type="SignaLink" id="P30419"/>
<dbReference type="SIGNOR" id="P30419"/>
<dbReference type="BioGRID-ORCS" id="4836">
    <property type="hits" value="489 hits in 1171 CRISPR screens"/>
</dbReference>
<dbReference type="ChiTaRS" id="NMT1">
    <property type="organism name" value="human"/>
</dbReference>
<dbReference type="EvolutionaryTrace" id="P30419"/>
<dbReference type="GeneWiki" id="N-myristoyltransferase_1"/>
<dbReference type="GenomeRNAi" id="4836"/>
<dbReference type="Pharos" id="P30419">
    <property type="development level" value="Tchem"/>
</dbReference>
<dbReference type="PRO" id="PR:P30419"/>
<dbReference type="Proteomes" id="UP000005640">
    <property type="component" value="Chromosome 17"/>
</dbReference>
<dbReference type="RNAct" id="P30419">
    <property type="molecule type" value="protein"/>
</dbReference>
<dbReference type="Bgee" id="ENSG00000136448">
    <property type="expression patterns" value="Expressed in monocyte and 209 other cell types or tissues"/>
</dbReference>
<dbReference type="ExpressionAtlas" id="P30419">
    <property type="expression patterns" value="baseline and differential"/>
</dbReference>
<dbReference type="GO" id="GO:0005737">
    <property type="term" value="C:cytoplasm"/>
    <property type="evidence" value="ECO:0000314"/>
    <property type="project" value="UniProtKB"/>
</dbReference>
<dbReference type="GO" id="GO:0005829">
    <property type="term" value="C:cytosol"/>
    <property type="evidence" value="ECO:0000314"/>
    <property type="project" value="HPA"/>
</dbReference>
<dbReference type="GO" id="GO:0005886">
    <property type="term" value="C:plasma membrane"/>
    <property type="evidence" value="ECO:0000314"/>
    <property type="project" value="HPA"/>
</dbReference>
<dbReference type="GO" id="GO:0004379">
    <property type="term" value="F:glycylpeptide N-tetradecanoyltransferase activity"/>
    <property type="evidence" value="ECO:0000314"/>
    <property type="project" value="UniProtKB"/>
</dbReference>
<dbReference type="GO" id="GO:0019107">
    <property type="term" value="F:myristoyltransferase activity"/>
    <property type="evidence" value="ECO:0000314"/>
    <property type="project" value="BHF-UCL"/>
</dbReference>
<dbReference type="GO" id="GO:0018030">
    <property type="term" value="F:peptidyl-lysine N6-myristoyltransferase activity"/>
    <property type="evidence" value="ECO:0000314"/>
    <property type="project" value="UniProtKB"/>
</dbReference>
<dbReference type="GO" id="GO:0001701">
    <property type="term" value="P:in utero embryonic development"/>
    <property type="evidence" value="ECO:0007669"/>
    <property type="project" value="Ensembl"/>
</dbReference>
<dbReference type="GO" id="GO:0042180">
    <property type="term" value="P:ketone metabolic process"/>
    <property type="evidence" value="ECO:0000314"/>
    <property type="project" value="BHF-UCL"/>
</dbReference>
<dbReference type="GO" id="GO:0018008">
    <property type="term" value="P:N-terminal peptidyl-glycine N-myristoylation"/>
    <property type="evidence" value="ECO:0000314"/>
    <property type="project" value="UniProtKB"/>
</dbReference>
<dbReference type="GO" id="GO:1903749">
    <property type="term" value="P:positive regulation of establishment of protein localization to mitochondrion"/>
    <property type="evidence" value="ECO:0000304"/>
    <property type="project" value="Reactome"/>
</dbReference>
<dbReference type="GO" id="GO:0072657">
    <property type="term" value="P:protein localization to membrane"/>
    <property type="evidence" value="ECO:0000314"/>
    <property type="project" value="UniProt"/>
</dbReference>
<dbReference type="GO" id="GO:0022400">
    <property type="term" value="P:regulation of opsin-mediated signaling pathway"/>
    <property type="evidence" value="ECO:0000304"/>
    <property type="project" value="Reactome"/>
</dbReference>
<dbReference type="CDD" id="cd04301">
    <property type="entry name" value="NAT_SF"/>
    <property type="match status" value="1"/>
</dbReference>
<dbReference type="FunFam" id="3.40.630.170:FF:000001">
    <property type="entry name" value="Glycylpeptide N-tetradecanoyltransferase"/>
    <property type="match status" value="1"/>
</dbReference>
<dbReference type="Gene3D" id="3.40.630.170">
    <property type="match status" value="1"/>
</dbReference>
<dbReference type="InterPro" id="IPR016181">
    <property type="entry name" value="Acyl_CoA_acyltransferase"/>
</dbReference>
<dbReference type="InterPro" id="IPR000903">
    <property type="entry name" value="NMT"/>
</dbReference>
<dbReference type="InterPro" id="IPR022677">
    <property type="entry name" value="NMT_C"/>
</dbReference>
<dbReference type="InterPro" id="IPR022678">
    <property type="entry name" value="NMT_CS"/>
</dbReference>
<dbReference type="InterPro" id="IPR022676">
    <property type="entry name" value="NMT_N"/>
</dbReference>
<dbReference type="PANTHER" id="PTHR11377:SF7">
    <property type="entry name" value="GLYCYLPEPTIDE N-TETRADECANOYLTRANSFERASE 1"/>
    <property type="match status" value="1"/>
</dbReference>
<dbReference type="PANTHER" id="PTHR11377">
    <property type="entry name" value="N-MYRISTOYL TRANSFERASE"/>
    <property type="match status" value="1"/>
</dbReference>
<dbReference type="Pfam" id="PF01233">
    <property type="entry name" value="NMT"/>
    <property type="match status" value="1"/>
</dbReference>
<dbReference type="Pfam" id="PF02799">
    <property type="entry name" value="NMT_C"/>
    <property type="match status" value="1"/>
</dbReference>
<dbReference type="PIRSF" id="PIRSF015892">
    <property type="entry name" value="N-myristl_transf"/>
    <property type="match status" value="1"/>
</dbReference>
<dbReference type="SUPFAM" id="SSF55729">
    <property type="entry name" value="Acyl-CoA N-acyltransferases (Nat)"/>
    <property type="match status" value="2"/>
</dbReference>
<dbReference type="PROSITE" id="PS00975">
    <property type="entry name" value="NMT_1"/>
    <property type="match status" value="1"/>
</dbReference>
<dbReference type="PROSITE" id="PS00976">
    <property type="entry name" value="NMT_2"/>
    <property type="match status" value="1"/>
</dbReference>
<evidence type="ECO:0000250" key="1">
    <source>
        <dbReference type="UniProtKB" id="O70310"/>
    </source>
</evidence>
<evidence type="ECO:0000256" key="2">
    <source>
        <dbReference type="SAM" id="MobiDB-lite"/>
    </source>
</evidence>
<evidence type="ECO:0000269" key="3">
    <source>
    </source>
</evidence>
<evidence type="ECO:0000269" key="4">
    <source>
    </source>
</evidence>
<evidence type="ECO:0000269" key="5">
    <source>
    </source>
</evidence>
<evidence type="ECO:0000269" key="6">
    <source>
    </source>
</evidence>
<evidence type="ECO:0000269" key="7">
    <source>
    </source>
</evidence>
<evidence type="ECO:0000269" key="8">
    <source>
    </source>
</evidence>
<evidence type="ECO:0000269" key="9">
    <source>
    </source>
</evidence>
<evidence type="ECO:0000269" key="10">
    <source>
    </source>
</evidence>
<evidence type="ECO:0000269" key="11">
    <source>
    </source>
</evidence>
<evidence type="ECO:0000269" key="12">
    <source ref="19"/>
</evidence>
<evidence type="ECO:0000303" key="13">
    <source>
    </source>
</evidence>
<evidence type="ECO:0000303" key="14">
    <source>
    </source>
</evidence>
<evidence type="ECO:0000303" key="15">
    <source>
    </source>
</evidence>
<evidence type="ECO:0000303" key="16">
    <source>
    </source>
</evidence>
<evidence type="ECO:0000305" key="17"/>
<evidence type="ECO:0000312" key="18">
    <source>
        <dbReference type="HGNC" id="HGNC:7857"/>
    </source>
</evidence>
<evidence type="ECO:0007744" key="19">
    <source>
        <dbReference type="PDB" id="6EHJ"/>
    </source>
</evidence>
<evidence type="ECO:0007744" key="20">
    <source>
        <dbReference type="PDB" id="6PAV"/>
    </source>
</evidence>
<evidence type="ECO:0007744" key="21">
    <source>
        <dbReference type="PDB" id="6QRM"/>
    </source>
</evidence>
<evidence type="ECO:0007744" key="22">
    <source>
        <dbReference type="PDB" id="6SJZ"/>
    </source>
</evidence>
<evidence type="ECO:0007744" key="23">
    <source>
        <dbReference type="PDB" id="6SK2"/>
    </source>
</evidence>
<evidence type="ECO:0007744" key="24">
    <source>
        <dbReference type="PDB" id="6SK3"/>
    </source>
</evidence>
<evidence type="ECO:0007744" key="25">
    <source>
        <dbReference type="PDB" id="6SK8"/>
    </source>
</evidence>
<evidence type="ECO:0007744" key="26">
    <source>
        <dbReference type="PDB" id="6SKJ"/>
    </source>
</evidence>
<evidence type="ECO:0007744" key="27">
    <source>
    </source>
</evidence>
<evidence type="ECO:0007744" key="28">
    <source>
    </source>
</evidence>
<evidence type="ECO:0007744" key="29">
    <source>
    </source>
</evidence>
<evidence type="ECO:0007744" key="30">
    <source>
    </source>
</evidence>
<evidence type="ECO:0007744" key="31">
    <source>
    </source>
</evidence>
<evidence type="ECO:0007744" key="32">
    <source>
    </source>
</evidence>
<evidence type="ECO:0007829" key="33">
    <source>
        <dbReference type="PDB" id="1RXT"/>
    </source>
</evidence>
<evidence type="ECO:0007829" key="34">
    <source>
        <dbReference type="PDB" id="5O6H"/>
    </source>
</evidence>
<evidence type="ECO:0007829" key="35">
    <source>
        <dbReference type="PDB" id="5O9V"/>
    </source>
</evidence>
<evidence type="ECO:0007829" key="36">
    <source>
        <dbReference type="PDB" id="7OWM"/>
    </source>
</evidence>
<evidence type="ECO:0007829" key="37">
    <source>
        <dbReference type="PDB" id="7OWU"/>
    </source>
</evidence>
<evidence type="ECO:0007829" key="38">
    <source>
        <dbReference type="PDB" id="8Q3S"/>
    </source>
</evidence>
<evidence type="ECO:0007829" key="39">
    <source>
        <dbReference type="PDB" id="8Q3T"/>
    </source>
</evidence>
<feature type="chain" id="PRO_0000064221" description="Glycylpeptide N-tetradecanoyltransferase 1">
    <location>
        <begin position="1"/>
        <end position="496"/>
    </location>
</feature>
<feature type="region of interest" description="Disordered" evidence="2">
    <location>
        <begin position="1"/>
        <end position="82"/>
    </location>
</feature>
<feature type="compositionally biased region" description="Basic residues" evidence="2">
    <location>
        <begin position="55"/>
        <end position="66"/>
    </location>
</feature>
<feature type="binding site" evidence="5 7 12">
    <location>
        <position position="118"/>
    </location>
    <ligand>
        <name>tetradecanoyl-CoA</name>
        <dbReference type="ChEBI" id="CHEBI:57385"/>
    </ligand>
</feature>
<feature type="binding site" evidence="5 6 7 12">
    <location>
        <position position="119"/>
    </location>
    <ligand>
        <name>tetradecanoyl-CoA</name>
        <dbReference type="ChEBI" id="CHEBI:57385"/>
    </ligand>
</feature>
<feature type="binding site" evidence="5 6 7 12">
    <location>
        <position position="120"/>
    </location>
    <ligand>
        <name>tetradecanoyl-CoA</name>
        <dbReference type="ChEBI" id="CHEBI:57385"/>
    </ligand>
</feature>
<feature type="binding site" evidence="6">
    <location>
        <position position="247"/>
    </location>
    <ligand>
        <name>tetradecanoyl-CoA</name>
        <dbReference type="ChEBI" id="CHEBI:57385"/>
    </ligand>
</feature>
<feature type="binding site" evidence="5 6 7 12">
    <location>
        <position position="248"/>
    </location>
    <ligand>
        <name>tetradecanoyl-CoA</name>
        <dbReference type="ChEBI" id="CHEBI:57385"/>
    </ligand>
</feature>
<feature type="binding site" evidence="5 12">
    <location>
        <position position="249"/>
    </location>
    <ligand>
        <name>tetradecanoyl-CoA</name>
        <dbReference type="ChEBI" id="CHEBI:57385"/>
    </ligand>
</feature>
<feature type="binding site" evidence="5 6 7 12">
    <location>
        <position position="250"/>
    </location>
    <ligand>
        <name>tetradecanoyl-CoA</name>
        <dbReference type="ChEBI" id="CHEBI:57385"/>
    </ligand>
</feature>
<feature type="binding site" evidence="5 6 7 12">
    <location>
        <position position="256"/>
    </location>
    <ligand>
        <name>tetradecanoyl-CoA</name>
        <dbReference type="ChEBI" id="CHEBI:57385"/>
    </ligand>
</feature>
<feature type="binding site" evidence="5 7 12">
    <location>
        <position position="258"/>
    </location>
    <ligand>
        <name>tetradecanoyl-CoA</name>
        <dbReference type="ChEBI" id="CHEBI:57385"/>
    </ligand>
</feature>
<feature type="binding site" evidence="5 7 12">
    <location>
        <position position="259"/>
    </location>
    <ligand>
        <name>tetradecanoyl-CoA</name>
        <dbReference type="ChEBI" id="CHEBI:57385"/>
    </ligand>
</feature>
<feature type="binding site" evidence="5 7 12">
    <location>
        <position position="260"/>
    </location>
    <ligand>
        <name>tetradecanoyl-CoA</name>
        <dbReference type="ChEBI" id="CHEBI:57385"/>
    </ligand>
</feature>
<feature type="modified residue" description="Phosphoserine" evidence="1">
    <location>
        <position position="31"/>
    </location>
</feature>
<feature type="modified residue" description="Phosphoserine" evidence="27 28 29 30 31 32">
    <location>
        <position position="47"/>
    </location>
</feature>
<feature type="modified residue" description="Phosphoserine" evidence="31">
    <location>
        <position position="83"/>
    </location>
</feature>
<feature type="splice variant" id="VSP_003570" description="In isoform Short." evidence="13">
    <location>
        <begin position="1"/>
        <end position="80"/>
    </location>
</feature>
<feature type="sequence variant" id="VAR_050286" description="In dbSNP:rs3087878.">
    <original>Q</original>
    <variation>K</variation>
    <location>
        <position position="61"/>
    </location>
</feature>
<feature type="mutagenesis site" description="Abolished glycine- and lysine-myristoyltransferase activities." evidence="7">
    <original>Y</original>
    <variation>P</variation>
    <location>
        <position position="180"/>
    </location>
</feature>
<feature type="mutagenesis site" description="Reduced glycine N-myristoyltransferase activity." evidence="7">
    <original>V</original>
    <variation>L</variation>
    <location>
        <position position="181"/>
    </location>
</feature>
<feature type="mutagenesis site" description="Reduced glycine N-myristoyltransferase activity." evidence="7">
    <original>Y</original>
    <variation>A</variation>
    <location>
        <position position="192"/>
    </location>
</feature>
<feature type="mutagenesis site" description="Reduced activity." evidence="3">
    <original>G</original>
    <variation>D</variation>
    <variation>K</variation>
    <location>
        <position position="492"/>
    </location>
</feature>
<feature type="strand" evidence="35">
    <location>
        <begin position="106"/>
        <end position="108"/>
    </location>
</feature>
<feature type="helix" evidence="36">
    <location>
        <begin position="109"/>
        <end position="113"/>
    </location>
</feature>
<feature type="helix" evidence="34">
    <location>
        <begin position="120"/>
        <end position="122"/>
    </location>
</feature>
<feature type="strand" evidence="34">
    <location>
        <begin position="123"/>
        <end position="125"/>
    </location>
</feature>
<feature type="strand" evidence="36">
    <location>
        <begin position="128"/>
        <end position="130"/>
    </location>
</feature>
<feature type="strand" evidence="34">
    <location>
        <begin position="156"/>
        <end position="160"/>
    </location>
</feature>
<feature type="helix" evidence="34">
    <location>
        <begin position="166"/>
        <end position="179"/>
    </location>
</feature>
<feature type="strand" evidence="34">
    <location>
        <begin position="188"/>
        <end position="190"/>
    </location>
</feature>
<feature type="helix" evidence="34">
    <location>
        <begin position="194"/>
        <end position="201"/>
    </location>
</feature>
<feature type="helix" evidence="34">
    <location>
        <begin position="208"/>
        <end position="210"/>
    </location>
</feature>
<feature type="strand" evidence="34">
    <location>
        <begin position="211"/>
        <end position="216"/>
    </location>
</feature>
<feature type="turn" evidence="34">
    <location>
        <begin position="217"/>
        <end position="219"/>
    </location>
</feature>
<feature type="strand" evidence="34">
    <location>
        <begin position="222"/>
        <end position="235"/>
    </location>
</feature>
<feature type="strand" evidence="34">
    <location>
        <begin position="238"/>
        <end position="250"/>
    </location>
</feature>
<feature type="helix" evidence="34">
    <location>
        <begin position="252"/>
        <end position="254"/>
    </location>
</feature>
<feature type="strand" evidence="37">
    <location>
        <begin position="256"/>
        <end position="258"/>
    </location>
</feature>
<feature type="helix" evidence="34">
    <location>
        <begin position="260"/>
        <end position="272"/>
    </location>
</feature>
<feature type="turn" evidence="34">
    <location>
        <begin position="273"/>
        <end position="275"/>
    </location>
</feature>
<feature type="strand" evidence="34">
    <location>
        <begin position="279"/>
        <end position="285"/>
    </location>
</feature>
<feature type="strand" evidence="34">
    <location>
        <begin position="291"/>
        <end position="302"/>
    </location>
</feature>
<feature type="helix" evidence="34">
    <location>
        <begin position="303"/>
        <end position="308"/>
    </location>
</feature>
<feature type="strand" evidence="38">
    <location>
        <begin position="316"/>
        <end position="318"/>
    </location>
</feature>
<feature type="helix" evidence="34">
    <location>
        <begin position="320"/>
        <end position="327"/>
    </location>
</feature>
<feature type="strand" evidence="34">
    <location>
        <begin position="338"/>
        <end position="340"/>
    </location>
</feature>
<feature type="helix" evidence="34">
    <location>
        <begin position="343"/>
        <end position="345"/>
    </location>
</feature>
<feature type="helix" evidence="34">
    <location>
        <begin position="346"/>
        <end position="357"/>
    </location>
</feature>
<feature type="strand" evidence="34">
    <location>
        <begin position="360"/>
        <end position="365"/>
    </location>
</feature>
<feature type="helix" evidence="34">
    <location>
        <begin position="368"/>
        <end position="375"/>
    </location>
</feature>
<feature type="turn" evidence="34">
    <location>
        <begin position="379"/>
        <end position="381"/>
    </location>
</feature>
<feature type="strand" evidence="34">
    <location>
        <begin position="382"/>
        <end position="388"/>
    </location>
</feature>
<feature type="strand" evidence="33">
    <location>
        <begin position="390"/>
        <end position="392"/>
    </location>
</feature>
<feature type="strand" evidence="34">
    <location>
        <begin position="394"/>
        <end position="402"/>
    </location>
</feature>
<feature type="strand" evidence="34">
    <location>
        <begin position="405"/>
        <end position="407"/>
    </location>
</feature>
<feature type="strand" evidence="39">
    <location>
        <begin position="410"/>
        <end position="413"/>
    </location>
</feature>
<feature type="strand" evidence="34">
    <location>
        <begin position="418"/>
        <end position="421"/>
    </location>
</feature>
<feature type="strand" evidence="34">
    <location>
        <begin position="427"/>
        <end position="429"/>
    </location>
</feature>
<feature type="helix" evidence="34">
    <location>
        <begin position="431"/>
        <end position="444"/>
    </location>
</feature>
<feature type="strand" evidence="34">
    <location>
        <begin position="448"/>
        <end position="454"/>
    </location>
</feature>
<feature type="helix" evidence="34">
    <location>
        <begin position="458"/>
        <end position="460"/>
    </location>
</feature>
<feature type="turn" evidence="34">
    <location>
        <begin position="461"/>
        <end position="466"/>
    </location>
</feature>
<feature type="strand" evidence="34">
    <location>
        <begin position="468"/>
        <end position="480"/>
    </location>
</feature>
<feature type="helix" evidence="34">
    <location>
        <begin position="488"/>
        <end position="490"/>
    </location>
</feature>
<sequence>MADESETAVKPPAPPLPQMMEGNGNGHEHCSDCENEEDNSYNRGGLSPANDTGAKKKKKKQKKKKEKGSETDSAQDQPVKMNSLPAERIQEIQKAIELFSVGQGPAKTMEEASKRSYQFWDTQPVPKLGEVVNTHGPVEPDKDNIRQEPYTLPQGFTWDALDLGDRGVLKELYTLLNENYVEDDDNMFRFDYSPEFLLWALRPPGWLPQWHCGVRVVSSRKLVGFISAIPANIHIYDTEKKMVEINFLCVHKKLRSKRVAPVLIREITRRVHLEGIFQAVYTAGVVLPKPVGTCRYWHRSLNPRKLIEVKFSHLSRNMTMQRTMKLYRLPETPKTAGLRPMETKDIPVVHQLLTRYLKQFHLTPVMSQEEVEHWFYPQENIIDTFVVENANGEVTDFLSFYTLPSTIMNHPTHKSLKAAYSFYNVHTQTPLLDLMSDALVLAKMKGFDVFNALDLMENKTFLEKLKFGIGDGNLQYYLYNWKCPSMGAEKVGLVLQ</sequence>
<accession>P30419</accession>
<accession>A8K7C1</accession>
<accession>Q9UE09</accession>
<protein>
    <recommendedName>
        <fullName evidence="17">Glycylpeptide N-tetradecanoyltransferase 1</fullName>
        <ecNumber evidence="4 5 10 11">2.3.1.97</ecNumber>
    </recommendedName>
    <alternativeName>
        <fullName>Myristoyl-CoA:protein N-myristoyltransferase 1</fullName>
        <shortName evidence="14">HsNMT1</shortName>
        <shortName>NMT 1</shortName>
        <shortName>Type I N-myristoyltransferase</shortName>
    </alternativeName>
    <alternativeName>
        <fullName>Peptide N-myristoyltransferase 1</fullName>
    </alternativeName>
    <alternativeName>
        <fullName evidence="17">Protein-lysine myristoyltransferase NMT1</fullName>
        <ecNumber evidence="6 7">2.3.1.-</ecNumber>
    </alternativeName>
</protein>
<keyword id="KW-0002">3D-structure</keyword>
<keyword id="KW-0012">Acyltransferase</keyword>
<keyword id="KW-0025">Alternative splicing</keyword>
<keyword id="KW-0963">Cytoplasm</keyword>
<keyword id="KW-0472">Membrane</keyword>
<keyword id="KW-0597">Phosphoprotein</keyword>
<keyword id="KW-1267">Proteomics identification</keyword>
<keyword id="KW-1185">Reference proteome</keyword>
<keyword id="KW-0808">Transferase</keyword>
<organism>
    <name type="scientific">Homo sapiens</name>
    <name type="common">Human</name>
    <dbReference type="NCBI Taxonomy" id="9606"/>
    <lineage>
        <taxon>Eukaryota</taxon>
        <taxon>Metazoa</taxon>
        <taxon>Chordata</taxon>
        <taxon>Craniata</taxon>
        <taxon>Vertebrata</taxon>
        <taxon>Euteleostomi</taxon>
        <taxon>Mammalia</taxon>
        <taxon>Eutheria</taxon>
        <taxon>Euarchontoglires</taxon>
        <taxon>Primates</taxon>
        <taxon>Haplorrhini</taxon>
        <taxon>Catarrhini</taxon>
        <taxon>Hominidae</taxon>
        <taxon>Homo</taxon>
    </lineage>
</organism>
<reference key="1">
    <citation type="journal article" date="1997" name="J. Biol. Chem.">
        <title>Human N-myristoyltransferase amino-terminal domain involved in targeting the enzyme to the ribosomal subcellular fraction.</title>
        <authorList>
            <person name="Glover C.J."/>
            <person name="Hartman K.D."/>
            <person name="Felsted R.L."/>
        </authorList>
    </citation>
    <scope>NUCLEOTIDE SEQUENCE [MRNA]</scope>
    <scope>FUNCTION</scope>
    <scope>CATALYTIC ACTIVITY</scope>
    <scope>SUBCELLULAR LOCATION</scope>
</reference>
<reference key="2">
    <citation type="journal article" date="1998" name="J. Biol. Chem.">
        <title>A second mammalian N-myristoyltransferase.</title>
        <authorList>
            <person name="Giang D.K."/>
            <person name="Cravatt B.F."/>
        </authorList>
    </citation>
    <scope>NUCLEOTIDE SEQUENCE [MRNA]</scope>
    <scope>FUNCTION</scope>
    <scope>CATALYTIC ACTIVITY</scope>
    <scope>SUBCELLULAR LOCATION</scope>
    <source>
        <tissue>Brain</tissue>
    </source>
</reference>
<reference key="3">
    <citation type="journal article" date="2004" name="Nat. Genet.">
        <title>Complete sequencing and characterization of 21,243 full-length human cDNAs.</title>
        <authorList>
            <person name="Ota T."/>
            <person name="Suzuki Y."/>
            <person name="Nishikawa T."/>
            <person name="Otsuki T."/>
            <person name="Sugiyama T."/>
            <person name="Irie R."/>
            <person name="Wakamatsu A."/>
            <person name="Hayashi K."/>
            <person name="Sato H."/>
            <person name="Nagai K."/>
            <person name="Kimura K."/>
            <person name="Makita H."/>
            <person name="Sekine M."/>
            <person name="Obayashi M."/>
            <person name="Nishi T."/>
            <person name="Shibahara T."/>
            <person name="Tanaka T."/>
            <person name="Ishii S."/>
            <person name="Yamamoto J."/>
            <person name="Saito K."/>
            <person name="Kawai Y."/>
            <person name="Isono Y."/>
            <person name="Nakamura Y."/>
            <person name="Nagahari K."/>
            <person name="Murakami K."/>
            <person name="Yasuda T."/>
            <person name="Iwayanagi T."/>
            <person name="Wagatsuma M."/>
            <person name="Shiratori A."/>
            <person name="Sudo H."/>
            <person name="Hosoiri T."/>
            <person name="Kaku Y."/>
            <person name="Kodaira H."/>
            <person name="Kondo H."/>
            <person name="Sugawara M."/>
            <person name="Takahashi M."/>
            <person name="Kanda K."/>
            <person name="Yokoi T."/>
            <person name="Furuya T."/>
            <person name="Kikkawa E."/>
            <person name="Omura Y."/>
            <person name="Abe K."/>
            <person name="Kamihara K."/>
            <person name="Katsuta N."/>
            <person name="Sato K."/>
            <person name="Tanikawa M."/>
            <person name="Yamazaki M."/>
            <person name="Ninomiya K."/>
            <person name="Ishibashi T."/>
            <person name="Yamashita H."/>
            <person name="Murakawa K."/>
            <person name="Fujimori K."/>
            <person name="Tanai H."/>
            <person name="Kimata M."/>
            <person name="Watanabe M."/>
            <person name="Hiraoka S."/>
            <person name="Chiba Y."/>
            <person name="Ishida S."/>
            <person name="Ono Y."/>
            <person name="Takiguchi S."/>
            <person name="Watanabe S."/>
            <person name="Yosida M."/>
            <person name="Hotuta T."/>
            <person name="Kusano J."/>
            <person name="Kanehori K."/>
            <person name="Takahashi-Fujii A."/>
            <person name="Hara H."/>
            <person name="Tanase T.-O."/>
            <person name="Nomura Y."/>
            <person name="Togiya S."/>
            <person name="Komai F."/>
            <person name="Hara R."/>
            <person name="Takeuchi K."/>
            <person name="Arita M."/>
            <person name="Imose N."/>
            <person name="Musashino K."/>
            <person name="Yuuki H."/>
            <person name="Oshima A."/>
            <person name="Sasaki N."/>
            <person name="Aotsuka S."/>
            <person name="Yoshikawa Y."/>
            <person name="Matsunawa H."/>
            <person name="Ichihara T."/>
            <person name="Shiohata N."/>
            <person name="Sano S."/>
            <person name="Moriya S."/>
            <person name="Momiyama H."/>
            <person name="Satoh N."/>
            <person name="Takami S."/>
            <person name="Terashima Y."/>
            <person name="Suzuki O."/>
            <person name="Nakagawa S."/>
            <person name="Senoh A."/>
            <person name="Mizoguchi H."/>
            <person name="Goto Y."/>
            <person name="Shimizu F."/>
            <person name="Wakebe H."/>
            <person name="Hishigaki H."/>
            <person name="Watanabe T."/>
            <person name="Sugiyama A."/>
            <person name="Takemoto M."/>
            <person name="Kawakami B."/>
            <person name="Yamazaki M."/>
            <person name="Watanabe K."/>
            <person name="Kumagai A."/>
            <person name="Itakura S."/>
            <person name="Fukuzumi Y."/>
            <person name="Fujimori Y."/>
            <person name="Komiyama M."/>
            <person name="Tashiro H."/>
            <person name="Tanigami A."/>
            <person name="Fujiwara T."/>
            <person name="Ono T."/>
            <person name="Yamada K."/>
            <person name="Fujii Y."/>
            <person name="Ozaki K."/>
            <person name="Hirao M."/>
            <person name="Ohmori Y."/>
            <person name="Kawabata A."/>
            <person name="Hikiji T."/>
            <person name="Kobatake N."/>
            <person name="Inagaki H."/>
            <person name="Ikema Y."/>
            <person name="Okamoto S."/>
            <person name="Okitani R."/>
            <person name="Kawakami T."/>
            <person name="Noguchi S."/>
            <person name="Itoh T."/>
            <person name="Shigeta K."/>
            <person name="Senba T."/>
            <person name="Matsumura K."/>
            <person name="Nakajima Y."/>
            <person name="Mizuno T."/>
            <person name="Morinaga M."/>
            <person name="Sasaki M."/>
            <person name="Togashi T."/>
            <person name="Oyama M."/>
            <person name="Hata H."/>
            <person name="Watanabe M."/>
            <person name="Komatsu T."/>
            <person name="Mizushima-Sugano J."/>
            <person name="Satoh T."/>
            <person name="Shirai Y."/>
            <person name="Takahashi Y."/>
            <person name="Nakagawa K."/>
            <person name="Okumura K."/>
            <person name="Nagase T."/>
            <person name="Nomura N."/>
            <person name="Kikuchi H."/>
            <person name="Masuho Y."/>
            <person name="Yamashita R."/>
            <person name="Nakai K."/>
            <person name="Yada T."/>
            <person name="Nakamura Y."/>
            <person name="Ohara O."/>
            <person name="Isogai T."/>
            <person name="Sugano S."/>
        </authorList>
    </citation>
    <scope>NUCLEOTIDE SEQUENCE [LARGE SCALE MRNA] (ISOFORM LONG)</scope>
</reference>
<reference key="4">
    <citation type="submission" date="2005-09" db="EMBL/GenBank/DDBJ databases">
        <authorList>
            <person name="Mural R.J."/>
            <person name="Istrail S."/>
            <person name="Sutton G.G."/>
            <person name="Florea L."/>
            <person name="Halpern A.L."/>
            <person name="Mobarry C.M."/>
            <person name="Lippert R."/>
            <person name="Walenz B."/>
            <person name="Shatkay H."/>
            <person name="Dew I."/>
            <person name="Miller J.R."/>
            <person name="Flanigan M.J."/>
            <person name="Edwards N.J."/>
            <person name="Bolanos R."/>
            <person name="Fasulo D."/>
            <person name="Halldorsson B.V."/>
            <person name="Hannenhalli S."/>
            <person name="Turner R."/>
            <person name="Yooseph S."/>
            <person name="Lu F."/>
            <person name="Nusskern D.R."/>
            <person name="Shue B.C."/>
            <person name="Zheng X.H."/>
            <person name="Zhong F."/>
            <person name="Delcher A.L."/>
            <person name="Huson D.H."/>
            <person name="Kravitz S.A."/>
            <person name="Mouchard L."/>
            <person name="Reinert K."/>
            <person name="Remington K.A."/>
            <person name="Clark A.G."/>
            <person name="Waterman M.S."/>
            <person name="Eichler E.E."/>
            <person name="Adams M.D."/>
            <person name="Hunkapiller M.W."/>
            <person name="Myers E.W."/>
            <person name="Venter J.C."/>
        </authorList>
    </citation>
    <scope>NUCLEOTIDE SEQUENCE [LARGE SCALE GENOMIC DNA]</scope>
</reference>
<reference key="5">
    <citation type="journal article" date="2004" name="Genome Res.">
        <title>The status, quality, and expansion of the NIH full-length cDNA project: the Mammalian Gene Collection (MGC).</title>
        <authorList>
            <consortium name="The MGC Project Team"/>
        </authorList>
    </citation>
    <scope>NUCLEOTIDE SEQUENCE [LARGE SCALE MRNA] (ISOFORMS LONG AND SHORT)</scope>
    <source>
        <tissue>Muscle</tissue>
        <tissue>Skin</tissue>
    </source>
</reference>
<reference key="6">
    <citation type="journal article" date="1992" name="Proc. Natl. Acad. Sci. U.S.A.">
        <title>Mutations of human myristoyl-CoA:protein N-myristoyltransferase cause temperature-sensitive myristic acid auxotrophy in Saccharomyces cerevisiae.</title>
        <authorList>
            <person name="Duronio R.J."/>
            <person name="Reed S.I."/>
            <person name="Gordon J.I."/>
        </authorList>
    </citation>
    <scope>NUCLEOTIDE SEQUENCE [MRNA] OF 58-496</scope>
    <scope>TISSUE SPECIFICITY</scope>
    <scope>MUTAGENESIS OF GLY-492</scope>
</reference>
<reference key="7">
    <citation type="journal article" date="1998" name="Biochem. J.">
        <title>Characterization of human and rat brain myristoyl-CoA:protein N-myristoyltransferase: evidence for an alternative splice variant of the enzyme.</title>
        <authorList>
            <person name="Mcilhinney R.A.J."/>
            <person name="Young K."/>
            <person name="Egerton M."/>
            <person name="Camble R."/>
            <person name="White A."/>
            <person name="Soloviev M."/>
        </authorList>
    </citation>
    <scope>NUCLEOTIDE SEQUENCE [MRNA] OF 81-89</scope>
</reference>
<reference key="8">
    <citation type="journal article" date="2006" name="Nat. Biotechnol.">
        <title>A probability-based approach for high-throughput protein phosphorylation analysis and site localization.</title>
        <authorList>
            <person name="Beausoleil S.A."/>
            <person name="Villen J."/>
            <person name="Gerber S.A."/>
            <person name="Rush J."/>
            <person name="Gygi S.P."/>
        </authorList>
    </citation>
    <scope>PHOSPHORYLATION [LARGE SCALE ANALYSIS] AT SER-47</scope>
    <scope>IDENTIFICATION BY MASS SPECTROMETRY [LARGE SCALE ANALYSIS]</scope>
    <source>
        <tissue>Cervix carcinoma</tissue>
    </source>
</reference>
<reference key="9">
    <citation type="journal article" date="2008" name="Proc. Natl. Acad. Sci. U.S.A.">
        <title>A quantitative atlas of mitotic phosphorylation.</title>
        <authorList>
            <person name="Dephoure N."/>
            <person name="Zhou C."/>
            <person name="Villen J."/>
            <person name="Beausoleil S.A."/>
            <person name="Bakalarski C.E."/>
            <person name="Elledge S.J."/>
            <person name="Gygi S.P."/>
        </authorList>
    </citation>
    <scope>PHOSPHORYLATION [LARGE SCALE ANALYSIS] AT SER-47</scope>
    <scope>IDENTIFICATION BY MASS SPECTROMETRY [LARGE SCALE ANALYSIS]</scope>
    <source>
        <tissue>Cervix carcinoma</tissue>
    </source>
</reference>
<reference key="10">
    <citation type="journal article" date="2010" name="Sci. Signal.">
        <title>Quantitative phosphoproteomics reveals widespread full phosphorylation site occupancy during mitosis.</title>
        <authorList>
            <person name="Olsen J.V."/>
            <person name="Vermeulen M."/>
            <person name="Santamaria A."/>
            <person name="Kumar C."/>
            <person name="Miller M.L."/>
            <person name="Jensen L.J."/>
            <person name="Gnad F."/>
            <person name="Cox J."/>
            <person name="Jensen T.S."/>
            <person name="Nigg E.A."/>
            <person name="Brunak S."/>
            <person name="Mann M."/>
        </authorList>
    </citation>
    <scope>PHOSPHORYLATION [LARGE SCALE ANALYSIS] AT SER-47</scope>
    <scope>IDENTIFICATION BY MASS SPECTROMETRY [LARGE SCALE ANALYSIS]</scope>
    <source>
        <tissue>Cervix carcinoma</tissue>
    </source>
</reference>
<reference key="11">
    <citation type="journal article" date="2011" name="BMC Syst. Biol.">
        <title>Initial characterization of the human central proteome.</title>
        <authorList>
            <person name="Burkard T.R."/>
            <person name="Planyavsky M."/>
            <person name="Kaupe I."/>
            <person name="Breitwieser F.P."/>
            <person name="Buerckstuemmer T."/>
            <person name="Bennett K.L."/>
            <person name="Superti-Furga G."/>
            <person name="Colinge J."/>
        </authorList>
    </citation>
    <scope>IDENTIFICATION BY MASS SPECTROMETRY [LARGE SCALE ANALYSIS]</scope>
</reference>
<reference key="12">
    <citation type="journal article" date="2011" name="Sci. Signal.">
        <title>System-wide temporal characterization of the proteome and phosphoproteome of human embryonic stem cell differentiation.</title>
        <authorList>
            <person name="Rigbolt K.T."/>
            <person name="Prokhorova T.A."/>
            <person name="Akimov V."/>
            <person name="Henningsen J."/>
            <person name="Johansen P.T."/>
            <person name="Kratchmarova I."/>
            <person name="Kassem M."/>
            <person name="Mann M."/>
            <person name="Olsen J.V."/>
            <person name="Blagoev B."/>
        </authorList>
    </citation>
    <scope>PHOSPHORYLATION [LARGE SCALE ANALYSIS] AT SER-47</scope>
    <scope>IDENTIFICATION BY MASS SPECTROMETRY [LARGE SCALE ANALYSIS]</scope>
</reference>
<reference key="13">
    <citation type="journal article" date="2012" name="J. Biol. Chem.">
        <title>Identification and characterization of an extramitochondrial human 3-Hydroxy-3-methylglutaryl-CoA lyase.</title>
        <authorList>
            <person name="Montgomery C."/>
            <person name="Pei Z."/>
            <person name="Watkins P.A."/>
            <person name="Miziorko H.M."/>
        </authorList>
    </citation>
    <scope>CATALYTIC ACTIVITY</scope>
    <scope>FUNCTION</scope>
</reference>
<reference key="14">
    <citation type="journal article" date="2012" name="Proc. Natl. Acad. Sci. U.S.A.">
        <title>N-terminal acetylome analyses and functional insights of the N-terminal acetyltransferase NatB.</title>
        <authorList>
            <person name="Van Damme P."/>
            <person name="Lasa M."/>
            <person name="Polevoda B."/>
            <person name="Gazquez C."/>
            <person name="Elosegui-Artola A."/>
            <person name="Kim D.S."/>
            <person name="De Juan-Pardo E."/>
            <person name="Demeyer K."/>
            <person name="Hole K."/>
            <person name="Larrea E."/>
            <person name="Timmerman E."/>
            <person name="Prieto J."/>
            <person name="Arnesen T."/>
            <person name="Sherman F."/>
            <person name="Gevaert K."/>
            <person name="Aldabe R."/>
        </authorList>
    </citation>
    <scope>IDENTIFICATION BY MASS SPECTROMETRY [LARGE SCALE ANALYSIS]</scope>
</reference>
<reference key="15">
    <citation type="journal article" date="2013" name="J. Proteome Res.">
        <title>Toward a comprehensive characterization of a human cancer cell phosphoproteome.</title>
        <authorList>
            <person name="Zhou H."/>
            <person name="Di Palma S."/>
            <person name="Preisinger C."/>
            <person name="Peng M."/>
            <person name="Polat A.N."/>
            <person name="Heck A.J."/>
            <person name="Mohammed S."/>
        </authorList>
    </citation>
    <scope>PHOSPHORYLATION [LARGE SCALE ANALYSIS] AT SER-47 AND SER-83</scope>
    <scope>IDENTIFICATION BY MASS SPECTROMETRY [LARGE SCALE ANALYSIS]</scope>
    <source>
        <tissue>Cervix carcinoma</tissue>
        <tissue>Erythroleukemia</tissue>
    </source>
</reference>
<reference key="16">
    <citation type="journal article" date="2014" name="J. Proteomics">
        <title>An enzyme assisted RP-RPLC approach for in-depth analysis of human liver phosphoproteome.</title>
        <authorList>
            <person name="Bian Y."/>
            <person name="Song C."/>
            <person name="Cheng K."/>
            <person name="Dong M."/>
            <person name="Wang F."/>
            <person name="Huang J."/>
            <person name="Sun D."/>
            <person name="Wang L."/>
            <person name="Ye M."/>
            <person name="Zou H."/>
        </authorList>
    </citation>
    <scope>PHOSPHORYLATION [LARGE SCALE ANALYSIS] AT SER-47</scope>
    <scope>IDENTIFICATION BY MASS SPECTROMETRY [LARGE SCALE ANALYSIS]</scope>
    <source>
        <tissue>Liver</tissue>
    </source>
</reference>
<reference key="17">
    <citation type="journal article" date="2020" name="Sci. Rep.">
        <title>N-myristoyltransferase-1 is necessary for lysosomal degradation and mTORC1 activation in cancer cells.</title>
        <authorList>
            <person name="Chen Y.C."/>
            <person name="Navarrete M.S."/>
            <person name="Wang Y."/>
            <person name="McClintock N.C."/>
            <person name="Sakurai R."/>
            <person name="Wang F."/>
            <person name="Chen K.T."/>
            <person name="Chou T.F."/>
            <person name="Rehan V.K."/>
            <person name="Lee D.J."/>
            <person name="Diaz B."/>
        </authorList>
    </citation>
    <scope>FUNCTION</scope>
    <scope>CATALYTIC ACTIVITY</scope>
</reference>
<reference key="18">
    <citation type="journal article" date="2022" name="Cancer Lett.">
        <title>N-myristoyltransferase-1 deficiency blocks myristoylation of LAMTOR1 and inhibits bladder cancer progression.</title>
        <authorList>
            <person name="Sun Y."/>
            <person name="Guan Z."/>
            <person name="Sheng Q."/>
            <person name="Duan W."/>
            <person name="Zhao H."/>
            <person name="Zhou J."/>
            <person name="Deng Q."/>
            <person name="Pei X."/>
        </authorList>
    </citation>
    <scope>FUNCTION</scope>
    <scope>CATALYTIC ACTIVITY</scope>
</reference>
<reference key="19">
    <citation type="submission" date="2009-09" db="PDB data bank">
        <title>Crystal structure of human type-I N-myristoyltransferase with bound myristoyl-CoA and inhibitor DDD90055.</title>
        <authorList>
            <consortium name="Structural genomics consortium (SGC)"/>
        </authorList>
    </citation>
    <scope>X-RAY CRYSTALLOGRAPHY (1.61 ANGSTROMS) OF 115-496 IN COMPLEX WITH TETRADECANOYL-COA</scope>
</reference>
<reference key="20">
    <citation type="journal article" date="2014" name="Nat. Commun.">
        <title>Global profiling of co- and post-translationally N-myristoylated proteomes in human cells.</title>
        <authorList>
            <person name="Thinon E."/>
            <person name="Serwa R.A."/>
            <person name="Broncel M."/>
            <person name="Brannigan J.A."/>
            <person name="Brassat U."/>
            <person name="Wright M.H."/>
            <person name="Heal W.P."/>
            <person name="Wilkinson A.J."/>
            <person name="Mann D.J."/>
            <person name="Tate E.W."/>
        </authorList>
    </citation>
    <scope>X-RAY CRYSTALLOGRAPHY (1.64 ANGSTROMS) OF 109-496 IN COMPLEX WITH TETRADECANOYL-COA</scope>
    <scope>CATALYTIC ACTIVITY</scope>
    <scope>FUNCTION</scope>
</reference>
<reference evidence="20" key="21">
    <citation type="journal article" date="2020" name="Nat. Commun.">
        <title>NMT1 and NMT2 are lysine myristoyltransferases regulating the ARF6 GTPase cycle.</title>
        <authorList>
            <person name="Kosciuk T."/>
            <person name="Price I.R."/>
            <person name="Zhang X."/>
            <person name="Zhu C."/>
            <person name="Johnson K.N."/>
            <person name="Zhang S."/>
            <person name="Halaby S.L."/>
            <person name="Komaniecki G.P."/>
            <person name="Yang M."/>
            <person name="DeHart C.J."/>
            <person name="Thomas P.M."/>
            <person name="Kelleher N.L."/>
            <person name="Fromme J.C."/>
            <person name="Lin H."/>
        </authorList>
    </citation>
    <scope>X-RAY CRYSTALLOGRAPHY (2.52 ANGSTROMS) OF 109-496 IN COMPLEX WITH TETRADECANOYL-COA</scope>
    <scope>FUNCTION</scope>
    <scope>CATALYTIC ACTIVITY</scope>
</reference>
<reference evidence="19 21 22 23 24 25 26" key="22">
    <citation type="journal article" date="2020" name="Nat. Commun.">
        <title>High-resolution snapshots of human N-myristoyltransferase in action illuminate a mechanism promoting N-terminal Lys and Gly myristoylation.</title>
        <authorList>
            <person name="Dian C."/>
            <person name="Perez-Dorado I."/>
            <person name="Riviere F."/>
            <person name="Asensio T."/>
            <person name="Legrand P."/>
            <person name="Ritzefeld M."/>
            <person name="Shen M."/>
            <person name="Cota E."/>
            <person name="Meinnel T."/>
            <person name="Tate E.W."/>
            <person name="Giglione C."/>
        </authorList>
    </citation>
    <scope>X-RAY CRYSTALLOGRAPHY (1.87 ANGSTROMS) OF 99-493 IN COMPLEX WITH TETRADECANOYL-COA</scope>
    <scope>FUNCTION</scope>
    <scope>CATALYTIC ACTIVITY</scope>
    <scope>BIOPHYSICOCHEMICAL PROPERTIES</scope>
    <scope>MUTAGENESIS OF TYR-180; VAL-181 AND TYR-192</scope>
</reference>